<name>TORD_ECOL6</name>
<keyword id="KW-0143">Chaperone</keyword>
<keyword id="KW-0963">Cytoplasm</keyword>
<keyword id="KW-1185">Reference proteome</keyword>
<reference key="1">
    <citation type="journal article" date="2002" name="Proc. Natl. Acad. Sci. U.S.A.">
        <title>Extensive mosaic structure revealed by the complete genome sequence of uropathogenic Escherichia coli.</title>
        <authorList>
            <person name="Welch R.A."/>
            <person name="Burland V."/>
            <person name="Plunkett G. III"/>
            <person name="Redford P."/>
            <person name="Roesch P."/>
            <person name="Rasko D."/>
            <person name="Buckles E.L."/>
            <person name="Liou S.-R."/>
            <person name="Boutin A."/>
            <person name="Hackett J."/>
            <person name="Stroud D."/>
            <person name="Mayhew G.F."/>
            <person name="Rose D.J."/>
            <person name="Zhou S."/>
            <person name="Schwartz D.C."/>
            <person name="Perna N.T."/>
            <person name="Mobley H.L.T."/>
            <person name="Donnenberg M.S."/>
            <person name="Blattner F.R."/>
        </authorList>
    </citation>
    <scope>NUCLEOTIDE SEQUENCE [LARGE SCALE GENOMIC DNA]</scope>
    <source>
        <strain>CFT073 / ATCC 700928 / UPEC</strain>
    </source>
</reference>
<organism>
    <name type="scientific">Escherichia coli O6:H1 (strain CFT073 / ATCC 700928 / UPEC)</name>
    <dbReference type="NCBI Taxonomy" id="199310"/>
    <lineage>
        <taxon>Bacteria</taxon>
        <taxon>Pseudomonadati</taxon>
        <taxon>Pseudomonadota</taxon>
        <taxon>Gammaproteobacteria</taxon>
        <taxon>Enterobacterales</taxon>
        <taxon>Enterobacteriaceae</taxon>
        <taxon>Escherichia</taxon>
    </lineage>
</organism>
<dbReference type="EMBL" id="AE014075">
    <property type="protein sequence ID" value="AAN79602.1"/>
    <property type="status" value="ALT_INIT"/>
    <property type="molecule type" value="Genomic_DNA"/>
</dbReference>
<dbReference type="RefSeq" id="WP_000209907.1">
    <property type="nucleotide sequence ID" value="NC_004431.1"/>
</dbReference>
<dbReference type="SMR" id="Q8FJ52"/>
<dbReference type="STRING" id="199310.c1134"/>
<dbReference type="KEGG" id="ecc:c1134"/>
<dbReference type="eggNOG" id="COG3381">
    <property type="taxonomic scope" value="Bacteria"/>
</dbReference>
<dbReference type="HOGENOM" id="CLU_077650_4_0_6"/>
<dbReference type="Proteomes" id="UP000001410">
    <property type="component" value="Chromosome"/>
</dbReference>
<dbReference type="GO" id="GO:0005737">
    <property type="term" value="C:cytoplasm"/>
    <property type="evidence" value="ECO:0007669"/>
    <property type="project" value="UniProtKB-SubCell"/>
</dbReference>
<dbReference type="GO" id="GO:0051259">
    <property type="term" value="P:protein complex oligomerization"/>
    <property type="evidence" value="ECO:0007669"/>
    <property type="project" value="InterPro"/>
</dbReference>
<dbReference type="GO" id="GO:0006457">
    <property type="term" value="P:protein folding"/>
    <property type="evidence" value="ECO:0007669"/>
    <property type="project" value="UniProtKB-UniRule"/>
</dbReference>
<dbReference type="FunFam" id="1.20.120.1820:FF:000001">
    <property type="entry name" value="Chaperone protein TorD"/>
    <property type="match status" value="1"/>
</dbReference>
<dbReference type="Gene3D" id="1.20.120.1820">
    <property type="match status" value="1"/>
</dbReference>
<dbReference type="Gene3D" id="1.20.1280.20">
    <property type="entry name" value="HscB, C-terminal domain"/>
    <property type="match status" value="1"/>
</dbReference>
<dbReference type="HAMAP" id="MF_01150">
    <property type="entry name" value="TorD"/>
    <property type="match status" value="1"/>
</dbReference>
<dbReference type="InterPro" id="IPR023069">
    <property type="entry name" value="Chaperone_TorD"/>
</dbReference>
<dbReference type="InterPro" id="IPR020945">
    <property type="entry name" value="DMSO/NO3_reduct_chaperone"/>
</dbReference>
<dbReference type="InterPro" id="IPR036386">
    <property type="entry name" value="HscB_C_sf"/>
</dbReference>
<dbReference type="InterPro" id="IPR036411">
    <property type="entry name" value="TorD-like_sf"/>
</dbReference>
<dbReference type="InterPro" id="IPR050289">
    <property type="entry name" value="TorD/DmsD_chaperones"/>
</dbReference>
<dbReference type="NCBIfam" id="NF003442">
    <property type="entry name" value="PRK04976.1"/>
    <property type="match status" value="1"/>
</dbReference>
<dbReference type="PANTHER" id="PTHR34227:SF11">
    <property type="entry name" value="CHAPERONE PROTEIN TORD"/>
    <property type="match status" value="1"/>
</dbReference>
<dbReference type="PANTHER" id="PTHR34227">
    <property type="entry name" value="CHAPERONE PROTEIN YCDY"/>
    <property type="match status" value="1"/>
</dbReference>
<dbReference type="Pfam" id="PF02613">
    <property type="entry name" value="Nitrate_red_del"/>
    <property type="match status" value="1"/>
</dbReference>
<dbReference type="SUPFAM" id="SSF89155">
    <property type="entry name" value="TorD-like"/>
    <property type="match status" value="1"/>
</dbReference>
<comment type="function">
    <text evidence="1">Involved in the biogenesis of TorA. Acts on TorA before the insertion of the molybdenum cofactor and, as a result, probably favors a conformation of the apoenzyme that is competent for acquiring the cofactor.</text>
</comment>
<comment type="subcellular location">
    <subcellularLocation>
        <location evidence="1">Cytoplasm</location>
    </subcellularLocation>
</comment>
<comment type="similarity">
    <text evidence="1">Belongs to the TorD/DmsD family. TorD subfamily.</text>
</comment>
<comment type="sequence caution" evidence="2">
    <conflict type="erroneous initiation">
        <sequence resource="EMBL-CDS" id="AAN79602"/>
    </conflict>
</comment>
<protein>
    <recommendedName>
        <fullName evidence="1">Chaperone protein TorD</fullName>
    </recommendedName>
</protein>
<gene>
    <name evidence="1" type="primary">torD</name>
    <name type="ordered locus">c1134</name>
</gene>
<accession>Q8FJ52</accession>
<sequence length="199" mass="22439">MTTLTAQQIACVYAWLAQLFSRELDDEQLTQIASAQMAEWFSLLKSEPPLTAAVNGLENSIATLTVRDDARLELAADFCGLFLMTDKQAALPYASAYKQDEQEIKRLLVEAGMETSGNFNEPADHLAIYPELLSHLHFSLGEGTVPARRIDGLRQKTLTALREWLPEFAARCRQYDRFGFYAALSQLLLVLVECDYQKR</sequence>
<feature type="chain" id="PRO_0000211635" description="Chaperone protein TorD">
    <location>
        <begin position="1"/>
        <end position="199"/>
    </location>
</feature>
<evidence type="ECO:0000255" key="1">
    <source>
        <dbReference type="HAMAP-Rule" id="MF_01150"/>
    </source>
</evidence>
<evidence type="ECO:0000305" key="2"/>
<proteinExistence type="inferred from homology"/>